<protein>
    <recommendedName>
        <fullName evidence="1">LexA repressor</fullName>
        <ecNumber evidence="1">3.4.21.88</ecNumber>
    </recommendedName>
</protein>
<reference key="1">
    <citation type="journal article" date="2005" name="PLoS Genet.">
        <title>Life in hot carbon monoxide: the complete genome sequence of Carboxydothermus hydrogenoformans Z-2901.</title>
        <authorList>
            <person name="Wu M."/>
            <person name="Ren Q."/>
            <person name="Durkin A.S."/>
            <person name="Daugherty S.C."/>
            <person name="Brinkac L.M."/>
            <person name="Dodson R.J."/>
            <person name="Madupu R."/>
            <person name="Sullivan S.A."/>
            <person name="Kolonay J.F."/>
            <person name="Nelson W.C."/>
            <person name="Tallon L.J."/>
            <person name="Jones K.M."/>
            <person name="Ulrich L.E."/>
            <person name="Gonzalez J.M."/>
            <person name="Zhulin I.B."/>
            <person name="Robb F.T."/>
            <person name="Eisen J.A."/>
        </authorList>
    </citation>
    <scope>NUCLEOTIDE SEQUENCE [LARGE SCALE GENOMIC DNA]</scope>
    <source>
        <strain>ATCC BAA-161 / DSM 6008 / Z-2901</strain>
    </source>
</reference>
<accession>Q3ACC4</accession>
<keyword id="KW-0068">Autocatalytic cleavage</keyword>
<keyword id="KW-0227">DNA damage</keyword>
<keyword id="KW-0234">DNA repair</keyword>
<keyword id="KW-0235">DNA replication</keyword>
<keyword id="KW-0238">DNA-binding</keyword>
<keyword id="KW-0378">Hydrolase</keyword>
<keyword id="KW-1185">Reference proteome</keyword>
<keyword id="KW-0678">Repressor</keyword>
<keyword id="KW-0742">SOS response</keyword>
<keyword id="KW-0804">Transcription</keyword>
<keyword id="KW-0805">Transcription regulation</keyword>
<sequence>MKNSLLSHQEKKIISFIKQYLNENGYPPTIREICQGVGLSSPSTVHHHLKNLESKGYLQRNPTKPRALELVAEKAPEELLSIPLLGNVAAGYPTLAIENAEEEMQIPKSLFPEKELFALRIKGDSMIEEGILPGDVIIVKKQEVAENGDIVVAYLEGEVTVKKFWKDSVNGVIKLIPANSKYEPIIINRETKILGKVIGLLRRY</sequence>
<dbReference type="EC" id="3.4.21.88" evidence="1"/>
<dbReference type="EMBL" id="CP000141">
    <property type="protein sequence ID" value="ABB16235.1"/>
    <property type="molecule type" value="Genomic_DNA"/>
</dbReference>
<dbReference type="RefSeq" id="WP_011344285.1">
    <property type="nucleotide sequence ID" value="NC_007503.1"/>
</dbReference>
<dbReference type="SMR" id="Q3ACC4"/>
<dbReference type="FunCoup" id="Q3ACC4">
    <property type="interactions" value="277"/>
</dbReference>
<dbReference type="STRING" id="246194.CHY_1378"/>
<dbReference type="MEROPS" id="S24.001"/>
<dbReference type="KEGG" id="chy:CHY_1378"/>
<dbReference type="eggNOG" id="COG1974">
    <property type="taxonomic scope" value="Bacteria"/>
</dbReference>
<dbReference type="HOGENOM" id="CLU_066192_45_1_9"/>
<dbReference type="InParanoid" id="Q3ACC4"/>
<dbReference type="OrthoDB" id="9802364at2"/>
<dbReference type="Proteomes" id="UP000002706">
    <property type="component" value="Chromosome"/>
</dbReference>
<dbReference type="GO" id="GO:0003677">
    <property type="term" value="F:DNA binding"/>
    <property type="evidence" value="ECO:0007669"/>
    <property type="project" value="UniProtKB-UniRule"/>
</dbReference>
<dbReference type="GO" id="GO:0004252">
    <property type="term" value="F:serine-type endopeptidase activity"/>
    <property type="evidence" value="ECO:0007669"/>
    <property type="project" value="UniProtKB-UniRule"/>
</dbReference>
<dbReference type="GO" id="GO:0006281">
    <property type="term" value="P:DNA repair"/>
    <property type="evidence" value="ECO:0007669"/>
    <property type="project" value="UniProtKB-UniRule"/>
</dbReference>
<dbReference type="GO" id="GO:0006260">
    <property type="term" value="P:DNA replication"/>
    <property type="evidence" value="ECO:0007669"/>
    <property type="project" value="UniProtKB-UniRule"/>
</dbReference>
<dbReference type="GO" id="GO:0045892">
    <property type="term" value="P:negative regulation of DNA-templated transcription"/>
    <property type="evidence" value="ECO:0007669"/>
    <property type="project" value="UniProtKB-UniRule"/>
</dbReference>
<dbReference type="GO" id="GO:0006508">
    <property type="term" value="P:proteolysis"/>
    <property type="evidence" value="ECO:0007669"/>
    <property type="project" value="InterPro"/>
</dbReference>
<dbReference type="GO" id="GO:0009432">
    <property type="term" value="P:SOS response"/>
    <property type="evidence" value="ECO:0007669"/>
    <property type="project" value="UniProtKB-UniRule"/>
</dbReference>
<dbReference type="CDD" id="cd00090">
    <property type="entry name" value="HTH_ARSR"/>
    <property type="match status" value="1"/>
</dbReference>
<dbReference type="CDD" id="cd06529">
    <property type="entry name" value="S24_LexA-like"/>
    <property type="match status" value="1"/>
</dbReference>
<dbReference type="FunFam" id="1.10.10.10:FF:000009">
    <property type="entry name" value="LexA repressor"/>
    <property type="match status" value="1"/>
</dbReference>
<dbReference type="FunFam" id="2.10.109.10:FF:000001">
    <property type="entry name" value="LexA repressor"/>
    <property type="match status" value="1"/>
</dbReference>
<dbReference type="Gene3D" id="2.10.109.10">
    <property type="entry name" value="Umud Fragment, subunit A"/>
    <property type="match status" value="1"/>
</dbReference>
<dbReference type="Gene3D" id="1.10.10.10">
    <property type="entry name" value="Winged helix-like DNA-binding domain superfamily/Winged helix DNA-binding domain"/>
    <property type="match status" value="1"/>
</dbReference>
<dbReference type="HAMAP" id="MF_00015">
    <property type="entry name" value="LexA"/>
    <property type="match status" value="1"/>
</dbReference>
<dbReference type="InterPro" id="IPR011991">
    <property type="entry name" value="ArsR-like_HTH"/>
</dbReference>
<dbReference type="InterPro" id="IPR006200">
    <property type="entry name" value="LexA"/>
</dbReference>
<dbReference type="InterPro" id="IPR039418">
    <property type="entry name" value="LexA-like"/>
</dbReference>
<dbReference type="InterPro" id="IPR036286">
    <property type="entry name" value="LexA/Signal_pep-like_sf"/>
</dbReference>
<dbReference type="InterPro" id="IPR006199">
    <property type="entry name" value="LexA_DNA-bd_dom"/>
</dbReference>
<dbReference type="InterPro" id="IPR050077">
    <property type="entry name" value="LexA_repressor"/>
</dbReference>
<dbReference type="InterPro" id="IPR006197">
    <property type="entry name" value="Peptidase_S24_LexA"/>
</dbReference>
<dbReference type="InterPro" id="IPR015927">
    <property type="entry name" value="Peptidase_S24_S26A/B/C"/>
</dbReference>
<dbReference type="InterPro" id="IPR036388">
    <property type="entry name" value="WH-like_DNA-bd_sf"/>
</dbReference>
<dbReference type="InterPro" id="IPR036390">
    <property type="entry name" value="WH_DNA-bd_sf"/>
</dbReference>
<dbReference type="NCBIfam" id="TIGR00498">
    <property type="entry name" value="lexA"/>
    <property type="match status" value="1"/>
</dbReference>
<dbReference type="PANTHER" id="PTHR33516">
    <property type="entry name" value="LEXA REPRESSOR"/>
    <property type="match status" value="1"/>
</dbReference>
<dbReference type="PANTHER" id="PTHR33516:SF2">
    <property type="entry name" value="LEXA REPRESSOR-RELATED"/>
    <property type="match status" value="1"/>
</dbReference>
<dbReference type="Pfam" id="PF01726">
    <property type="entry name" value="LexA_DNA_bind"/>
    <property type="match status" value="1"/>
</dbReference>
<dbReference type="Pfam" id="PF00717">
    <property type="entry name" value="Peptidase_S24"/>
    <property type="match status" value="1"/>
</dbReference>
<dbReference type="PRINTS" id="PR00726">
    <property type="entry name" value="LEXASERPTASE"/>
</dbReference>
<dbReference type="SUPFAM" id="SSF51306">
    <property type="entry name" value="LexA/Signal peptidase"/>
    <property type="match status" value="1"/>
</dbReference>
<dbReference type="SUPFAM" id="SSF46785">
    <property type="entry name" value="Winged helix' DNA-binding domain"/>
    <property type="match status" value="1"/>
</dbReference>
<feature type="chain" id="PRO_0000322718" description="LexA repressor">
    <location>
        <begin position="1"/>
        <end position="204"/>
    </location>
</feature>
<feature type="DNA-binding region" description="H-T-H motif" evidence="1">
    <location>
        <begin position="30"/>
        <end position="50"/>
    </location>
</feature>
<feature type="active site" description="For autocatalytic cleavage activity" evidence="1">
    <location>
        <position position="125"/>
    </location>
</feature>
<feature type="active site" description="For autocatalytic cleavage activity" evidence="1">
    <location>
        <position position="162"/>
    </location>
</feature>
<feature type="site" description="Cleavage; by autolysis" evidence="1">
    <location>
        <begin position="90"/>
        <end position="91"/>
    </location>
</feature>
<evidence type="ECO:0000255" key="1">
    <source>
        <dbReference type="HAMAP-Rule" id="MF_00015"/>
    </source>
</evidence>
<comment type="function">
    <text evidence="1">Represses a number of genes involved in the response to DNA damage (SOS response), including recA and lexA. In the presence of single-stranded DNA, RecA interacts with LexA causing an autocatalytic cleavage which disrupts the DNA-binding part of LexA, leading to derepression of the SOS regulon and eventually DNA repair.</text>
</comment>
<comment type="catalytic activity">
    <reaction evidence="1">
        <text>Hydrolysis of Ala-|-Gly bond in repressor LexA.</text>
        <dbReference type="EC" id="3.4.21.88"/>
    </reaction>
</comment>
<comment type="subunit">
    <text evidence="1">Homodimer.</text>
</comment>
<comment type="similarity">
    <text evidence="1">Belongs to the peptidase S24 family.</text>
</comment>
<name>LEXA_CARHZ</name>
<organism>
    <name type="scientific">Carboxydothermus hydrogenoformans (strain ATCC BAA-161 / DSM 6008 / Z-2901)</name>
    <dbReference type="NCBI Taxonomy" id="246194"/>
    <lineage>
        <taxon>Bacteria</taxon>
        <taxon>Bacillati</taxon>
        <taxon>Bacillota</taxon>
        <taxon>Clostridia</taxon>
        <taxon>Thermoanaerobacterales</taxon>
        <taxon>Thermoanaerobacteraceae</taxon>
        <taxon>Carboxydothermus</taxon>
    </lineage>
</organism>
<gene>
    <name evidence="1" type="primary">lexA</name>
    <name type="ordered locus">CHY_1378</name>
</gene>
<proteinExistence type="inferred from homology"/>